<keyword id="KW-0963">Cytoplasm</keyword>
<keyword id="KW-0378">Hydrolase</keyword>
<keyword id="KW-0479">Metal-binding</keyword>
<keyword id="KW-0547">Nucleotide-binding</keyword>
<accession>P36686</accession>
<dbReference type="EC" id="3.1.3.5"/>
<dbReference type="EMBL" id="L10653">
    <property type="status" value="NOT_ANNOTATED_CDS"/>
    <property type="molecule type" value="Genomic_DNA"/>
</dbReference>
<dbReference type="SMR" id="P36686"/>
<dbReference type="GO" id="GO:0005737">
    <property type="term" value="C:cytoplasm"/>
    <property type="evidence" value="ECO:0007669"/>
    <property type="project" value="UniProtKB-SubCell"/>
</dbReference>
<dbReference type="GO" id="GO:0008253">
    <property type="term" value="F:5'-nucleotidase activity"/>
    <property type="evidence" value="ECO:0007669"/>
    <property type="project" value="UniProtKB-EC"/>
</dbReference>
<dbReference type="GO" id="GO:0046872">
    <property type="term" value="F:metal ion binding"/>
    <property type="evidence" value="ECO:0007669"/>
    <property type="project" value="UniProtKB-KW"/>
</dbReference>
<dbReference type="GO" id="GO:0000166">
    <property type="term" value="F:nucleotide binding"/>
    <property type="evidence" value="ECO:0007669"/>
    <property type="project" value="UniProtKB-KW"/>
</dbReference>
<dbReference type="Gene3D" id="3.40.1210.10">
    <property type="entry name" value="Survival protein SurE-like phosphatase/nucleotidase"/>
    <property type="match status" value="1"/>
</dbReference>
<dbReference type="InterPro" id="IPR036523">
    <property type="entry name" value="SurE-like_sf"/>
</dbReference>
<dbReference type="SUPFAM" id="SSF64167">
    <property type="entry name" value="SurE-like"/>
    <property type="match status" value="1"/>
</dbReference>
<organism>
    <name type="scientific">Histophilus somni</name>
    <name type="common">Haemophilus somnus</name>
    <dbReference type="NCBI Taxonomy" id="731"/>
    <lineage>
        <taxon>Bacteria</taxon>
        <taxon>Pseudomonadati</taxon>
        <taxon>Pseudomonadota</taxon>
        <taxon>Gammaproteobacteria</taxon>
        <taxon>Pasteurellales</taxon>
        <taxon>Pasteurellaceae</taxon>
        <taxon>Histophilus</taxon>
    </lineage>
</organism>
<evidence type="ECO:0000250" key="1"/>
<evidence type="ECO:0000305" key="2"/>
<feature type="chain" id="PRO_0000111815" description="5'-nucleotidase SurE">
    <location>
        <begin position="1" status="less than"/>
        <end position="51"/>
    </location>
</feature>
<feature type="non-terminal residue">
    <location>
        <position position="1"/>
    </location>
</feature>
<protein>
    <recommendedName>
        <fullName>5'-nucleotidase SurE</fullName>
        <ecNumber>3.1.3.5</ecNumber>
    </recommendedName>
    <alternativeName>
        <fullName>Nucleoside 5'-monophosphate phosphohydrolase</fullName>
    </alternativeName>
</protein>
<sequence length="51" mass="5758">YWIGPIGLAENESEGTDFHAVKNGYVSITPIQTDMTAYHSMTALQQWLDKE</sequence>
<gene>
    <name type="primary">surE</name>
</gene>
<proteinExistence type="inferred from homology"/>
<comment type="function">
    <text evidence="1">Nucleotidase that shows phosphatase activity on nucleoside 5'-monophosphates.</text>
</comment>
<comment type="catalytic activity">
    <reaction>
        <text>a ribonucleoside 5'-phosphate + H2O = a ribonucleoside + phosphate</text>
        <dbReference type="Rhea" id="RHEA:12484"/>
        <dbReference type="ChEBI" id="CHEBI:15377"/>
        <dbReference type="ChEBI" id="CHEBI:18254"/>
        <dbReference type="ChEBI" id="CHEBI:43474"/>
        <dbReference type="ChEBI" id="CHEBI:58043"/>
        <dbReference type="EC" id="3.1.3.5"/>
    </reaction>
</comment>
<comment type="cofactor">
    <cofactor evidence="1">
        <name>a divalent metal cation</name>
        <dbReference type="ChEBI" id="CHEBI:60240"/>
    </cofactor>
    <text evidence="1">Binds 1 divalent metal cation per subunit.</text>
</comment>
<comment type="subcellular location">
    <subcellularLocation>
        <location evidence="2">Cytoplasm</location>
    </subcellularLocation>
</comment>
<comment type="similarity">
    <text evidence="2">Belongs to the SurE nucleotidase family.</text>
</comment>
<reference key="1">
    <citation type="journal article" date="1993" name="Infect. Immun.">
        <title>Molecular cloning, nucleotide sequence, and characterization of lppB, encoding an antigenic 40-kilodalton lipoprotein of Haemophilus somnus.</title>
        <authorList>
            <person name="Theisen M."/>
            <person name="Rioux C.R."/>
            <person name="Potter A.A."/>
        </authorList>
    </citation>
    <scope>NUCLEOTIDE SEQUENCE [GENOMIC DNA]</scope>
    <source>
        <strain>HS25</strain>
    </source>
</reference>
<reference key="2">
    <citation type="unpublished observations" date="1994-01">
        <authorList>
            <person name="Rudd K.E."/>
        </authorList>
    </citation>
    <scope>IDENTIFICATION</scope>
</reference>
<name>SURE_HISSO</name>